<keyword id="KW-0067">ATP-binding</keyword>
<keyword id="KW-0963">Cytoplasm</keyword>
<keyword id="KW-0227">DNA damage</keyword>
<keyword id="KW-0234">DNA repair</keyword>
<keyword id="KW-0235">DNA replication</keyword>
<keyword id="KW-0238">DNA-binding</keyword>
<keyword id="KW-0547">Nucleotide-binding</keyword>
<keyword id="KW-1185">Reference proteome</keyword>
<keyword id="KW-0742">SOS response</keyword>
<comment type="function">
    <text evidence="1">The RecF protein is involved in DNA metabolism; it is required for DNA replication and normal SOS inducibility. RecF binds preferentially to single-stranded, linear DNA. It also seems to bind ATP.</text>
</comment>
<comment type="subcellular location">
    <subcellularLocation>
        <location evidence="1">Cytoplasm</location>
    </subcellularLocation>
</comment>
<comment type="similarity">
    <text evidence="1">Belongs to the RecF family.</text>
</comment>
<protein>
    <recommendedName>
        <fullName evidence="1">DNA replication and repair protein RecF</fullName>
    </recommendedName>
</protein>
<gene>
    <name evidence="1" type="primary">recF</name>
    <name type="ordered locus">PMI3134</name>
</gene>
<organism>
    <name type="scientific">Proteus mirabilis (strain HI4320)</name>
    <dbReference type="NCBI Taxonomy" id="529507"/>
    <lineage>
        <taxon>Bacteria</taxon>
        <taxon>Pseudomonadati</taxon>
        <taxon>Pseudomonadota</taxon>
        <taxon>Gammaproteobacteria</taxon>
        <taxon>Enterobacterales</taxon>
        <taxon>Morganellaceae</taxon>
        <taxon>Proteus</taxon>
    </lineage>
</organism>
<feature type="chain" id="PRO_1000121139" description="DNA replication and repair protein RecF">
    <location>
        <begin position="1"/>
        <end position="362"/>
    </location>
</feature>
<feature type="binding site" evidence="1">
    <location>
        <begin position="30"/>
        <end position="37"/>
    </location>
    <ligand>
        <name>ATP</name>
        <dbReference type="ChEBI" id="CHEBI:30616"/>
    </ligand>
</feature>
<sequence length="362" mass="41293">MILSRLLIRHFRNIEQADLPLADGFNFLVGPNGSGKTSILEAIYTLGHGRAFRSAQANRVIQHDENAFILHGRLSGLDEESRGYSIGLSKDREGNSTVRIDGSDGHKIAELAKLLPMQLITPEGFTLLNGGPKYRRAFIDWGCFHNEPRFFAAWSDLKRVLKQRNAALRQASSYRQLLPWDKELILLTEQISQWRAEYTEDIAKDIEETCQLFLPEFTLKVSFQRGWDKETDYAQLLERQFERDKVLSYTSLGAHKADLRIRANGTPVEDMLSRGQLKLLMCALRLAQGEYFTRKNGQRCLYLLDDFASELDANRRQLLAERLKSTQAQVFVSAITSGQVKDMLDVNSRLFSVEHGKIEVKP</sequence>
<proteinExistence type="inferred from homology"/>
<reference key="1">
    <citation type="journal article" date="2008" name="J. Bacteriol.">
        <title>Complete genome sequence of uropathogenic Proteus mirabilis, a master of both adherence and motility.</title>
        <authorList>
            <person name="Pearson M.M."/>
            <person name="Sebaihia M."/>
            <person name="Churcher C."/>
            <person name="Quail M.A."/>
            <person name="Seshasayee A.S."/>
            <person name="Luscombe N.M."/>
            <person name="Abdellah Z."/>
            <person name="Arrosmith C."/>
            <person name="Atkin B."/>
            <person name="Chillingworth T."/>
            <person name="Hauser H."/>
            <person name="Jagels K."/>
            <person name="Moule S."/>
            <person name="Mungall K."/>
            <person name="Norbertczak H."/>
            <person name="Rabbinowitsch E."/>
            <person name="Walker D."/>
            <person name="Whithead S."/>
            <person name="Thomson N.R."/>
            <person name="Rather P.N."/>
            <person name="Parkhill J."/>
            <person name="Mobley H.L.T."/>
        </authorList>
    </citation>
    <scope>NUCLEOTIDE SEQUENCE [LARGE SCALE GENOMIC DNA]</scope>
    <source>
        <strain>HI4320</strain>
    </source>
</reference>
<name>RECF_PROMH</name>
<dbReference type="EMBL" id="AM942759">
    <property type="protein sequence ID" value="CAR46163.1"/>
    <property type="molecule type" value="Genomic_DNA"/>
</dbReference>
<dbReference type="RefSeq" id="WP_004246505.1">
    <property type="nucleotide sequence ID" value="NC_010554.1"/>
</dbReference>
<dbReference type="SMR" id="B4F0U7"/>
<dbReference type="EnsemblBacteria" id="CAR46163">
    <property type="protein sequence ID" value="CAR46163"/>
    <property type="gene ID" value="PMI3134"/>
</dbReference>
<dbReference type="GeneID" id="6801268"/>
<dbReference type="KEGG" id="pmr:PMI3134"/>
<dbReference type="eggNOG" id="COG1195">
    <property type="taxonomic scope" value="Bacteria"/>
</dbReference>
<dbReference type="HOGENOM" id="CLU_040267_0_0_6"/>
<dbReference type="Proteomes" id="UP000008319">
    <property type="component" value="Chromosome"/>
</dbReference>
<dbReference type="GO" id="GO:0005737">
    <property type="term" value="C:cytoplasm"/>
    <property type="evidence" value="ECO:0007669"/>
    <property type="project" value="UniProtKB-SubCell"/>
</dbReference>
<dbReference type="GO" id="GO:0005524">
    <property type="term" value="F:ATP binding"/>
    <property type="evidence" value="ECO:0007669"/>
    <property type="project" value="UniProtKB-UniRule"/>
</dbReference>
<dbReference type="GO" id="GO:0003697">
    <property type="term" value="F:single-stranded DNA binding"/>
    <property type="evidence" value="ECO:0007669"/>
    <property type="project" value="UniProtKB-UniRule"/>
</dbReference>
<dbReference type="GO" id="GO:0006260">
    <property type="term" value="P:DNA replication"/>
    <property type="evidence" value="ECO:0007669"/>
    <property type="project" value="UniProtKB-UniRule"/>
</dbReference>
<dbReference type="GO" id="GO:0000731">
    <property type="term" value="P:DNA synthesis involved in DNA repair"/>
    <property type="evidence" value="ECO:0007669"/>
    <property type="project" value="TreeGrafter"/>
</dbReference>
<dbReference type="GO" id="GO:0006302">
    <property type="term" value="P:double-strand break repair"/>
    <property type="evidence" value="ECO:0007669"/>
    <property type="project" value="TreeGrafter"/>
</dbReference>
<dbReference type="GO" id="GO:0009432">
    <property type="term" value="P:SOS response"/>
    <property type="evidence" value="ECO:0007669"/>
    <property type="project" value="UniProtKB-UniRule"/>
</dbReference>
<dbReference type="FunFam" id="1.20.1050.90:FF:000001">
    <property type="entry name" value="DNA replication and repair protein RecF"/>
    <property type="match status" value="1"/>
</dbReference>
<dbReference type="Gene3D" id="3.40.50.300">
    <property type="entry name" value="P-loop containing nucleotide triphosphate hydrolases"/>
    <property type="match status" value="1"/>
</dbReference>
<dbReference type="Gene3D" id="1.20.1050.90">
    <property type="entry name" value="RecF/RecN/SMC, N-terminal domain"/>
    <property type="match status" value="1"/>
</dbReference>
<dbReference type="HAMAP" id="MF_00365">
    <property type="entry name" value="RecF"/>
    <property type="match status" value="1"/>
</dbReference>
<dbReference type="InterPro" id="IPR001238">
    <property type="entry name" value="DNA-binding_RecF"/>
</dbReference>
<dbReference type="InterPro" id="IPR018078">
    <property type="entry name" value="DNA-binding_RecF_CS"/>
</dbReference>
<dbReference type="InterPro" id="IPR027417">
    <property type="entry name" value="P-loop_NTPase"/>
</dbReference>
<dbReference type="InterPro" id="IPR003395">
    <property type="entry name" value="RecF/RecN/SMC_N"/>
</dbReference>
<dbReference type="InterPro" id="IPR042174">
    <property type="entry name" value="RecF_2"/>
</dbReference>
<dbReference type="NCBIfam" id="TIGR00611">
    <property type="entry name" value="recf"/>
    <property type="match status" value="1"/>
</dbReference>
<dbReference type="PANTHER" id="PTHR32182">
    <property type="entry name" value="DNA REPLICATION AND REPAIR PROTEIN RECF"/>
    <property type="match status" value="1"/>
</dbReference>
<dbReference type="PANTHER" id="PTHR32182:SF0">
    <property type="entry name" value="DNA REPLICATION AND REPAIR PROTEIN RECF"/>
    <property type="match status" value="1"/>
</dbReference>
<dbReference type="Pfam" id="PF02463">
    <property type="entry name" value="SMC_N"/>
    <property type="match status" value="1"/>
</dbReference>
<dbReference type="SUPFAM" id="SSF52540">
    <property type="entry name" value="P-loop containing nucleoside triphosphate hydrolases"/>
    <property type="match status" value="1"/>
</dbReference>
<dbReference type="PROSITE" id="PS00617">
    <property type="entry name" value="RECF_1"/>
    <property type="match status" value="1"/>
</dbReference>
<dbReference type="PROSITE" id="PS00618">
    <property type="entry name" value="RECF_2"/>
    <property type="match status" value="1"/>
</dbReference>
<evidence type="ECO:0000255" key="1">
    <source>
        <dbReference type="HAMAP-Rule" id="MF_00365"/>
    </source>
</evidence>
<accession>B4F0U7</accession>